<accession>Q6CQI2</accession>
<comment type="function">
    <text evidence="1">Involved in pre-mRNA splicing.</text>
</comment>
<comment type="subunit">
    <text evidence="1">Associated with the spliceosome.</text>
</comment>
<comment type="subcellular location">
    <subcellularLocation>
        <location evidence="4">Nucleus</location>
    </subcellularLocation>
</comment>
<comment type="similarity">
    <text evidence="4">Belongs to the CWC15 family.</text>
</comment>
<organism>
    <name type="scientific">Kluyveromyces lactis (strain ATCC 8585 / CBS 2359 / DSM 70799 / NBRC 1267 / NRRL Y-1140 / WM37)</name>
    <name type="common">Yeast</name>
    <name type="synonym">Candida sphaerica</name>
    <dbReference type="NCBI Taxonomy" id="284590"/>
    <lineage>
        <taxon>Eukaryota</taxon>
        <taxon>Fungi</taxon>
        <taxon>Dikarya</taxon>
        <taxon>Ascomycota</taxon>
        <taxon>Saccharomycotina</taxon>
        <taxon>Saccharomycetes</taxon>
        <taxon>Saccharomycetales</taxon>
        <taxon>Saccharomycetaceae</taxon>
        <taxon>Kluyveromyces</taxon>
    </lineage>
</organism>
<gene>
    <name type="primary">CWC15</name>
    <name type="ordered locus">KLLA0D16896g</name>
</gene>
<dbReference type="EMBL" id="CR382124">
    <property type="protein sequence ID" value="CAH00903.1"/>
    <property type="molecule type" value="Genomic_DNA"/>
</dbReference>
<dbReference type="RefSeq" id="XP_453807.1">
    <property type="nucleotide sequence ID" value="XM_453807.1"/>
</dbReference>
<dbReference type="FunCoup" id="Q6CQI2">
    <property type="interactions" value="168"/>
</dbReference>
<dbReference type="STRING" id="284590.Q6CQI2"/>
<dbReference type="PaxDb" id="284590-Q6CQI2"/>
<dbReference type="KEGG" id="kla:KLLA0_D16896g"/>
<dbReference type="eggNOG" id="KOG3228">
    <property type="taxonomic scope" value="Eukaryota"/>
</dbReference>
<dbReference type="HOGENOM" id="CLU_100667_0_0_1"/>
<dbReference type="InParanoid" id="Q6CQI2"/>
<dbReference type="OMA" id="KYREHGQ"/>
<dbReference type="Proteomes" id="UP000000598">
    <property type="component" value="Chromosome D"/>
</dbReference>
<dbReference type="GO" id="GO:0071013">
    <property type="term" value="C:catalytic step 2 spliceosome"/>
    <property type="evidence" value="ECO:0007669"/>
    <property type="project" value="TreeGrafter"/>
</dbReference>
<dbReference type="GO" id="GO:0005634">
    <property type="term" value="C:nucleus"/>
    <property type="evidence" value="ECO:0000250"/>
    <property type="project" value="UniProtKB"/>
</dbReference>
<dbReference type="GO" id="GO:0003723">
    <property type="term" value="F:RNA binding"/>
    <property type="evidence" value="ECO:0000250"/>
    <property type="project" value="UniProtKB"/>
</dbReference>
<dbReference type="GO" id="GO:0045292">
    <property type="term" value="P:mRNA cis splicing, via spliceosome"/>
    <property type="evidence" value="ECO:0007669"/>
    <property type="project" value="TreeGrafter"/>
</dbReference>
<dbReference type="GO" id="GO:0000398">
    <property type="term" value="P:mRNA splicing, via spliceosome"/>
    <property type="evidence" value="ECO:0000250"/>
    <property type="project" value="UniProtKB"/>
</dbReference>
<dbReference type="InterPro" id="IPR006973">
    <property type="entry name" value="Cwf_Cwc_15"/>
</dbReference>
<dbReference type="PANTHER" id="PTHR12718">
    <property type="entry name" value="CELL CYCLE CONTROL PROTEIN CWF15"/>
    <property type="match status" value="1"/>
</dbReference>
<dbReference type="PANTHER" id="PTHR12718:SF2">
    <property type="entry name" value="SPLICEOSOME-ASSOCIATED PROTEIN CWC15 HOMOLOG"/>
    <property type="match status" value="1"/>
</dbReference>
<name>CWC15_KLULA</name>
<reference key="1">
    <citation type="journal article" date="2004" name="Nature">
        <title>Genome evolution in yeasts.</title>
        <authorList>
            <person name="Dujon B."/>
            <person name="Sherman D."/>
            <person name="Fischer G."/>
            <person name="Durrens P."/>
            <person name="Casaregola S."/>
            <person name="Lafontaine I."/>
            <person name="de Montigny J."/>
            <person name="Marck C."/>
            <person name="Neuveglise C."/>
            <person name="Talla E."/>
            <person name="Goffard N."/>
            <person name="Frangeul L."/>
            <person name="Aigle M."/>
            <person name="Anthouard V."/>
            <person name="Babour A."/>
            <person name="Barbe V."/>
            <person name="Barnay S."/>
            <person name="Blanchin S."/>
            <person name="Beckerich J.-M."/>
            <person name="Beyne E."/>
            <person name="Bleykasten C."/>
            <person name="Boisrame A."/>
            <person name="Boyer J."/>
            <person name="Cattolico L."/>
            <person name="Confanioleri F."/>
            <person name="de Daruvar A."/>
            <person name="Despons L."/>
            <person name="Fabre E."/>
            <person name="Fairhead C."/>
            <person name="Ferry-Dumazet H."/>
            <person name="Groppi A."/>
            <person name="Hantraye F."/>
            <person name="Hennequin C."/>
            <person name="Jauniaux N."/>
            <person name="Joyet P."/>
            <person name="Kachouri R."/>
            <person name="Kerrest A."/>
            <person name="Koszul R."/>
            <person name="Lemaire M."/>
            <person name="Lesur I."/>
            <person name="Ma L."/>
            <person name="Muller H."/>
            <person name="Nicaud J.-M."/>
            <person name="Nikolski M."/>
            <person name="Oztas S."/>
            <person name="Ozier-Kalogeropoulos O."/>
            <person name="Pellenz S."/>
            <person name="Potier S."/>
            <person name="Richard G.-F."/>
            <person name="Straub M.-L."/>
            <person name="Suleau A."/>
            <person name="Swennen D."/>
            <person name="Tekaia F."/>
            <person name="Wesolowski-Louvel M."/>
            <person name="Westhof E."/>
            <person name="Wirth B."/>
            <person name="Zeniou-Meyer M."/>
            <person name="Zivanovic Y."/>
            <person name="Bolotin-Fukuhara M."/>
            <person name="Thierry A."/>
            <person name="Bouchier C."/>
            <person name="Caudron B."/>
            <person name="Scarpelli C."/>
            <person name="Gaillardin C."/>
            <person name="Weissenbach J."/>
            <person name="Wincker P."/>
            <person name="Souciet J.-L."/>
        </authorList>
    </citation>
    <scope>NUCLEOTIDE SEQUENCE [LARGE SCALE GENOMIC DNA]</scope>
    <source>
        <strain>ATCC 8585 / CBS 2359 / DSM 70799 / NBRC 1267 / NRRL Y-1140 / WM37</strain>
    </source>
</reference>
<sequence length="187" mass="21647">MTTSHRPQLEARNGAKNIEYIPTSTQHARLLPGHKEVKYRNTKKRVLNRKVESTPSEEAKKRIKITGAEECSKDEEIQATDSSDEYEEEEEESEDEEALLEEWNKVKQERLDKKLREQRAEITAAQNEEVTKPQKHGGWRSNTVFGRKGTVNQSASISEHNSNGKGKYVNNITQSEYHKEFIRKHVK</sequence>
<evidence type="ECO:0000250" key="1"/>
<evidence type="ECO:0000255" key="2"/>
<evidence type="ECO:0000256" key="3">
    <source>
        <dbReference type="SAM" id="MobiDB-lite"/>
    </source>
</evidence>
<evidence type="ECO:0000305" key="4"/>
<proteinExistence type="inferred from homology"/>
<protein>
    <recommendedName>
        <fullName>Pre-mRNA-splicing factor CWC15</fullName>
    </recommendedName>
</protein>
<feature type="chain" id="PRO_0000218241" description="Pre-mRNA-splicing factor CWC15">
    <location>
        <begin position="1"/>
        <end position="187"/>
    </location>
</feature>
<feature type="region of interest" description="Disordered" evidence="3">
    <location>
        <begin position="33"/>
        <end position="100"/>
    </location>
</feature>
<feature type="region of interest" description="Disordered" evidence="3">
    <location>
        <begin position="124"/>
        <end position="146"/>
    </location>
</feature>
<feature type="coiled-coil region" evidence="2">
    <location>
        <begin position="72"/>
        <end position="131"/>
    </location>
</feature>
<feature type="compositionally biased region" description="Basic and acidic residues" evidence="3">
    <location>
        <begin position="49"/>
        <end position="60"/>
    </location>
</feature>
<feature type="compositionally biased region" description="Acidic residues" evidence="3">
    <location>
        <begin position="82"/>
        <end position="100"/>
    </location>
</feature>
<keyword id="KW-0175">Coiled coil</keyword>
<keyword id="KW-0507">mRNA processing</keyword>
<keyword id="KW-0508">mRNA splicing</keyword>
<keyword id="KW-0539">Nucleus</keyword>
<keyword id="KW-1185">Reference proteome</keyword>
<keyword id="KW-0747">Spliceosome</keyword>